<accession>B1LIN3</accession>
<evidence type="ECO:0000255" key="1">
    <source>
        <dbReference type="HAMAP-Rule" id="MF_01653"/>
    </source>
</evidence>
<comment type="function">
    <text evidence="1">Catalyzes the non-heme iron(II)-dependent oxidative cleavage of 2,3-dihydroxyphenylpropionic acid and 2,3-dihydroxicinnamic acid into 2-hydroxy-6-ketononadienedioate and 2-hydroxy-6-ketononatrienedioate, respectively.</text>
</comment>
<comment type="catalytic activity">
    <reaction evidence="1">
        <text>3-(2,3-dihydroxyphenyl)propanoate + O2 = (2Z,4E)-2-hydroxy-6-oxonona-2,4-dienedioate + H(+)</text>
        <dbReference type="Rhea" id="RHEA:23840"/>
        <dbReference type="ChEBI" id="CHEBI:15378"/>
        <dbReference type="ChEBI" id="CHEBI:15379"/>
        <dbReference type="ChEBI" id="CHEBI:46951"/>
        <dbReference type="ChEBI" id="CHEBI:66887"/>
        <dbReference type="EC" id="1.13.11.16"/>
    </reaction>
</comment>
<comment type="catalytic activity">
    <reaction evidence="1">
        <text>(2E)-3-(2,3-dihydroxyphenyl)prop-2-enoate + O2 = (2Z,4E,7E)-2-hydroxy-6-oxonona-2,4,7-trienedioate + H(+)</text>
        <dbReference type="Rhea" id="RHEA:25054"/>
        <dbReference type="ChEBI" id="CHEBI:15378"/>
        <dbReference type="ChEBI" id="CHEBI:15379"/>
        <dbReference type="ChEBI" id="CHEBI:58642"/>
        <dbReference type="ChEBI" id="CHEBI:66888"/>
        <dbReference type="EC" id="1.13.11.16"/>
    </reaction>
</comment>
<comment type="cofactor">
    <cofactor evidence="1">
        <name>Fe(2+)</name>
        <dbReference type="ChEBI" id="CHEBI:29033"/>
    </cofactor>
</comment>
<comment type="pathway">
    <text evidence="1">Aromatic compound metabolism; 3-phenylpropanoate degradation.</text>
</comment>
<comment type="subunit">
    <text evidence="1">Homotetramer.</text>
</comment>
<comment type="similarity">
    <text evidence="1">Belongs to the LigB/MhpB extradiol dioxygenase family.</text>
</comment>
<reference key="1">
    <citation type="journal article" date="2008" name="J. Bacteriol.">
        <title>Insights into the environmental resistance gene pool from the genome sequence of the multidrug-resistant environmental isolate Escherichia coli SMS-3-5.</title>
        <authorList>
            <person name="Fricke W.F."/>
            <person name="Wright M.S."/>
            <person name="Lindell A.H."/>
            <person name="Harkins D.M."/>
            <person name="Baker-Austin C."/>
            <person name="Ravel J."/>
            <person name="Stepanauskas R."/>
        </authorList>
    </citation>
    <scope>NUCLEOTIDE SEQUENCE [LARGE SCALE GENOMIC DNA]</scope>
    <source>
        <strain>SMS-3-5 / SECEC</strain>
    </source>
</reference>
<organism>
    <name type="scientific">Escherichia coli (strain SMS-3-5 / SECEC)</name>
    <dbReference type="NCBI Taxonomy" id="439855"/>
    <lineage>
        <taxon>Bacteria</taxon>
        <taxon>Pseudomonadati</taxon>
        <taxon>Pseudomonadota</taxon>
        <taxon>Gammaproteobacteria</taxon>
        <taxon>Enterobacterales</taxon>
        <taxon>Enterobacteriaceae</taxon>
        <taxon>Escherichia</taxon>
    </lineage>
</organism>
<gene>
    <name evidence="1" type="primary">mhpB</name>
    <name type="ordered locus">EcSMS35_0379</name>
</gene>
<proteinExistence type="inferred from homology"/>
<dbReference type="EC" id="1.13.11.16" evidence="1"/>
<dbReference type="EMBL" id="CP000970">
    <property type="protein sequence ID" value="ACB19906.1"/>
    <property type="molecule type" value="Genomic_DNA"/>
</dbReference>
<dbReference type="RefSeq" id="WP_000543457.1">
    <property type="nucleotide sequence ID" value="NC_010498.1"/>
</dbReference>
<dbReference type="SMR" id="B1LIN3"/>
<dbReference type="GeneID" id="93777107"/>
<dbReference type="KEGG" id="ecm:EcSMS35_0379"/>
<dbReference type="HOGENOM" id="CLU_078149_0_0_6"/>
<dbReference type="UniPathway" id="UPA00714"/>
<dbReference type="Proteomes" id="UP000007011">
    <property type="component" value="Chromosome"/>
</dbReference>
<dbReference type="GO" id="GO:0047070">
    <property type="term" value="F:3-carboxyethylcatechol 2,3-dioxygenase activity"/>
    <property type="evidence" value="ECO:0007669"/>
    <property type="project" value="UniProtKB-UniRule"/>
</dbReference>
<dbReference type="GO" id="GO:0008198">
    <property type="term" value="F:ferrous iron binding"/>
    <property type="evidence" value="ECO:0007669"/>
    <property type="project" value="InterPro"/>
</dbReference>
<dbReference type="GO" id="GO:0019380">
    <property type="term" value="P:3-phenylpropionate catabolic process"/>
    <property type="evidence" value="ECO:0007669"/>
    <property type="project" value="UniProtKB-UniRule"/>
</dbReference>
<dbReference type="CDD" id="cd07365">
    <property type="entry name" value="MhpB_like"/>
    <property type="match status" value="1"/>
</dbReference>
<dbReference type="Gene3D" id="3.40.830.10">
    <property type="entry name" value="LigB-like"/>
    <property type="match status" value="1"/>
</dbReference>
<dbReference type="HAMAP" id="MF_01653">
    <property type="entry name" value="MhpB"/>
    <property type="match status" value="1"/>
</dbReference>
<dbReference type="InterPro" id="IPR023789">
    <property type="entry name" value="DHPP/DHXA_dioxygenase"/>
</dbReference>
<dbReference type="InterPro" id="IPR004183">
    <property type="entry name" value="Xdiol_dOase_suB"/>
</dbReference>
<dbReference type="NCBIfam" id="NF009907">
    <property type="entry name" value="PRK13370.1-1"/>
    <property type="match status" value="1"/>
</dbReference>
<dbReference type="NCBIfam" id="NF009910">
    <property type="entry name" value="PRK13370.1-4"/>
    <property type="match status" value="1"/>
</dbReference>
<dbReference type="Pfam" id="PF02900">
    <property type="entry name" value="LigB"/>
    <property type="match status" value="1"/>
</dbReference>
<dbReference type="SUPFAM" id="SSF53213">
    <property type="entry name" value="LigB-like"/>
    <property type="match status" value="1"/>
</dbReference>
<feature type="chain" id="PRO_1000187008" description="2,3-dihydroxyphenylpropionate/2,3-dihydroxicinnamic acid 1,2-dioxygenase">
    <location>
        <begin position="1"/>
        <end position="314"/>
    </location>
</feature>
<feature type="active site" description="Proton donor" evidence="1">
    <location>
        <position position="115"/>
    </location>
</feature>
<feature type="active site" description="Proton acceptor" evidence="1">
    <location>
        <position position="179"/>
    </location>
</feature>
<sequence>MHAYLHCLSHSPLVGYVDPAQEVLDEVNGVIASARERIAAFSPELVVLFAPDHYNGFFYDVMPPFCLGVGATAIGDFGSAAGELPVPVELAEACAHAVMKSGIDLAVSYCMQVDHGFAQPLEFLLGGLDKVPVLPVFINGVATPLPGFQRTRMLGEAIGRFTSTLNKRVLFLGSGGLSHQPPVPELAKADAHMRDRLLGSGKDLPASERELRQQRVISAAEKFVEDQRTLHPLNPIWDNQFMTLLEQGRIQELDAVSNEELSAIAGKSTHEIKTWVAAFAAISAFGNWRSEGRYYRPIPEWIAGFGSLSARTEN</sequence>
<keyword id="KW-0058">Aromatic hydrocarbons catabolism</keyword>
<keyword id="KW-0223">Dioxygenase</keyword>
<keyword id="KW-0408">Iron</keyword>
<keyword id="KW-0560">Oxidoreductase</keyword>
<name>MHPB_ECOSM</name>
<protein>
    <recommendedName>
        <fullName evidence="1">2,3-dihydroxyphenylpropionate/2,3-dihydroxicinnamic acid 1,2-dioxygenase</fullName>
        <ecNumber evidence="1">1.13.11.16</ecNumber>
    </recommendedName>
    <alternativeName>
        <fullName evidence="1">3-carboxyethylcatechol 2,3-dioxygenase</fullName>
    </alternativeName>
</protein>